<keyword id="KW-0963">Cytoplasm</keyword>
<keyword id="KW-0489">Methyltransferase</keyword>
<keyword id="KW-1185">Reference proteome</keyword>
<keyword id="KW-0949">S-adenosyl-L-methionine</keyword>
<keyword id="KW-0808">Transferase</keyword>
<keyword id="KW-0819">tRNA processing</keyword>
<proteinExistence type="inferred from homology"/>
<protein>
    <recommendedName>
        <fullName evidence="1">tRNA (cytidine(56)-2'-O)-methyltransferase</fullName>
        <ecNumber evidence="1">2.1.1.206</ecNumber>
    </recommendedName>
    <alternativeName>
        <fullName evidence="1">tRNA ribose 2'-O-methyltransferase aTrm56</fullName>
    </alternativeName>
</protein>
<name>TRM56_METLZ</name>
<feature type="chain" id="PRO_0000365311" description="tRNA (cytidine(56)-2'-O)-methyltransferase">
    <location>
        <begin position="1"/>
        <end position="184"/>
    </location>
</feature>
<feature type="binding site" evidence="1">
    <location>
        <position position="87"/>
    </location>
    <ligand>
        <name>S-adenosyl-L-methionine</name>
        <dbReference type="ChEBI" id="CHEBI:59789"/>
    </ligand>
</feature>
<feature type="binding site" evidence="1">
    <location>
        <begin position="112"/>
        <end position="116"/>
    </location>
    <ligand>
        <name>S-adenosyl-L-methionine</name>
        <dbReference type="ChEBI" id="CHEBI:59789"/>
    </ligand>
</feature>
<feature type="binding site" evidence="1">
    <location>
        <begin position="130"/>
        <end position="137"/>
    </location>
    <ligand>
        <name>S-adenosyl-L-methionine</name>
        <dbReference type="ChEBI" id="CHEBI:59789"/>
    </ligand>
</feature>
<comment type="function">
    <text evidence="1">Specifically catalyzes the AdoMet-dependent 2'-O-ribose methylation of cytidine at position 56 in tRNAs.</text>
</comment>
<comment type="catalytic activity">
    <reaction evidence="1">
        <text>cytidine(56) in tRNA + S-adenosyl-L-methionine = 2'-O-methylcytidine(56) in tRNA + S-adenosyl-L-homocysteine + H(+)</text>
        <dbReference type="Rhea" id="RHEA:42968"/>
        <dbReference type="Rhea" id="RHEA-COMP:10308"/>
        <dbReference type="Rhea" id="RHEA-COMP:10309"/>
        <dbReference type="ChEBI" id="CHEBI:15378"/>
        <dbReference type="ChEBI" id="CHEBI:57856"/>
        <dbReference type="ChEBI" id="CHEBI:59789"/>
        <dbReference type="ChEBI" id="CHEBI:74495"/>
        <dbReference type="ChEBI" id="CHEBI:82748"/>
        <dbReference type="EC" id="2.1.1.206"/>
    </reaction>
</comment>
<comment type="subunit">
    <text evidence="1">Homodimer.</text>
</comment>
<comment type="subcellular location">
    <subcellularLocation>
        <location evidence="1">Cytoplasm</location>
    </subcellularLocation>
</comment>
<comment type="similarity">
    <text evidence="1">Belongs to the aTrm56 family.</text>
</comment>
<accession>A2SQM4</accession>
<gene>
    <name type="ordered locus">Mlab_0456</name>
</gene>
<sequence>MNLKPESYILRIGHRPERDQRVTTHVGLSSRALGASGMYLAADDAKVADSITDVATRFGGTFFCENNVKWKSCINQFKKSGGKVVHLTMYGLRLQDVIADIRKEEKVMIVVGAEKVPGDLYELADYNVAVANQPHSEISALALCLDHLYEGKELDLAFPDAELEVLPTKIGKTTIKHEHDQEKP</sequence>
<reference key="1">
    <citation type="journal article" date="2009" name="Stand. Genomic Sci.">
        <title>Complete genome sequence of Methanocorpusculum labreanum type strain Z.</title>
        <authorList>
            <person name="Anderson I.J."/>
            <person name="Sieprawska-Lupa M."/>
            <person name="Goltsman E."/>
            <person name="Lapidus A."/>
            <person name="Copeland A."/>
            <person name="Glavina Del Rio T."/>
            <person name="Tice H."/>
            <person name="Dalin E."/>
            <person name="Barry K."/>
            <person name="Pitluck S."/>
            <person name="Hauser L."/>
            <person name="Land M."/>
            <person name="Lucas S."/>
            <person name="Richardson P."/>
            <person name="Whitman W.B."/>
            <person name="Kyrpides N.C."/>
        </authorList>
    </citation>
    <scope>NUCLEOTIDE SEQUENCE [LARGE SCALE GENOMIC DNA]</scope>
    <source>
        <strain>ATCC 43576 / DSM 4855 / Z</strain>
    </source>
</reference>
<organism>
    <name type="scientific">Methanocorpusculum labreanum (strain ATCC 43576 / DSM 4855 / Z)</name>
    <dbReference type="NCBI Taxonomy" id="410358"/>
    <lineage>
        <taxon>Archaea</taxon>
        <taxon>Methanobacteriati</taxon>
        <taxon>Methanobacteriota</taxon>
        <taxon>Stenosarchaea group</taxon>
        <taxon>Methanomicrobia</taxon>
        <taxon>Methanomicrobiales</taxon>
        <taxon>Methanocorpusculaceae</taxon>
        <taxon>Methanocorpusculum</taxon>
    </lineage>
</organism>
<dbReference type="EC" id="2.1.1.206" evidence="1"/>
<dbReference type="EMBL" id="CP000559">
    <property type="protein sequence ID" value="ABN06630.1"/>
    <property type="molecule type" value="Genomic_DNA"/>
</dbReference>
<dbReference type="RefSeq" id="WP_011832831.1">
    <property type="nucleotide sequence ID" value="NC_008942.1"/>
</dbReference>
<dbReference type="SMR" id="A2SQM4"/>
<dbReference type="STRING" id="410358.Mlab_0456"/>
<dbReference type="GeneID" id="4795998"/>
<dbReference type="KEGG" id="mla:Mlab_0456"/>
<dbReference type="eggNOG" id="arCOG01857">
    <property type="taxonomic scope" value="Archaea"/>
</dbReference>
<dbReference type="HOGENOM" id="CLU_123709_0_0_2"/>
<dbReference type="OrthoDB" id="14397at2157"/>
<dbReference type="Proteomes" id="UP000000365">
    <property type="component" value="Chromosome"/>
</dbReference>
<dbReference type="GO" id="GO:0005737">
    <property type="term" value="C:cytoplasm"/>
    <property type="evidence" value="ECO:0007669"/>
    <property type="project" value="UniProtKB-SubCell"/>
</dbReference>
<dbReference type="GO" id="GO:0106059">
    <property type="term" value="F:tRNA (cytidine(56)-2'-O)-methyltransferase activity"/>
    <property type="evidence" value="ECO:0007669"/>
    <property type="project" value="UniProtKB-EC"/>
</dbReference>
<dbReference type="GO" id="GO:0002128">
    <property type="term" value="P:tRNA nucleoside ribose methylation"/>
    <property type="evidence" value="ECO:0007669"/>
    <property type="project" value="UniProtKB-UniRule"/>
</dbReference>
<dbReference type="CDD" id="cd18083">
    <property type="entry name" value="aTrm56-like"/>
    <property type="match status" value="1"/>
</dbReference>
<dbReference type="Gene3D" id="3.40.1280.10">
    <property type="match status" value="1"/>
</dbReference>
<dbReference type="HAMAP" id="MF_00077">
    <property type="entry name" value="tRNA_methyltr_aTrm56"/>
    <property type="match status" value="1"/>
</dbReference>
<dbReference type="InterPro" id="IPR029028">
    <property type="entry name" value="Alpha/beta_knot_MTases"/>
</dbReference>
<dbReference type="InterPro" id="IPR029026">
    <property type="entry name" value="tRNA_m1G_MTases_N"/>
</dbReference>
<dbReference type="InterPro" id="IPR002845">
    <property type="entry name" value="tRNA_mtfrase_aTrm56"/>
</dbReference>
<dbReference type="NCBIfam" id="NF003048">
    <property type="entry name" value="PRK03958.1"/>
    <property type="match status" value="1"/>
</dbReference>
<dbReference type="PANTHER" id="PTHR42197">
    <property type="entry name" value="TRNA (CYTIDINE(56)-2'-O)-METHYLTRANSFERASE"/>
    <property type="match status" value="1"/>
</dbReference>
<dbReference type="PANTHER" id="PTHR42197:SF1">
    <property type="entry name" value="TRNA (CYTIDINE(56)-2'-O)-METHYLTRANSFERASE"/>
    <property type="match status" value="1"/>
</dbReference>
<dbReference type="Pfam" id="PF01994">
    <property type="entry name" value="Trm56"/>
    <property type="match status" value="1"/>
</dbReference>
<dbReference type="PIRSF" id="PIRSF016123">
    <property type="entry name" value="UCP016123"/>
    <property type="match status" value="1"/>
</dbReference>
<dbReference type="SUPFAM" id="SSF75217">
    <property type="entry name" value="alpha/beta knot"/>
    <property type="match status" value="1"/>
</dbReference>
<evidence type="ECO:0000255" key="1">
    <source>
        <dbReference type="HAMAP-Rule" id="MF_00077"/>
    </source>
</evidence>